<proteinExistence type="inferred from homology"/>
<accession>A0JRH8</accession>
<name>URED_ARTS2</name>
<protein>
    <recommendedName>
        <fullName evidence="1">Urease accessory protein UreD</fullName>
    </recommendedName>
</protein>
<comment type="function">
    <text evidence="1">Required for maturation of urease via the functional incorporation of the urease nickel metallocenter.</text>
</comment>
<comment type="subunit">
    <text evidence="1">UreD, UreF and UreG form a complex that acts as a GTP-hydrolysis-dependent molecular chaperone, activating the urease apoprotein by helping to assemble the nickel containing metallocenter of UreC. The UreE protein probably delivers the nickel.</text>
</comment>
<comment type="subcellular location">
    <subcellularLocation>
        <location evidence="1">Cytoplasm</location>
    </subcellularLocation>
</comment>
<comment type="similarity">
    <text evidence="1">Belongs to the UreD family.</text>
</comment>
<comment type="sequence caution" evidence="2">
    <conflict type="erroneous initiation">
        <sequence resource="EMBL-CDS" id="ABK01648"/>
    </conflict>
</comment>
<dbReference type="EMBL" id="CP000454">
    <property type="protein sequence ID" value="ABK01648.1"/>
    <property type="status" value="ALT_INIT"/>
    <property type="molecule type" value="Genomic_DNA"/>
</dbReference>
<dbReference type="SMR" id="A0JRH8"/>
<dbReference type="STRING" id="290399.Arth_0247"/>
<dbReference type="KEGG" id="art:Arth_0247"/>
<dbReference type="eggNOG" id="COG0829">
    <property type="taxonomic scope" value="Bacteria"/>
</dbReference>
<dbReference type="HOGENOM" id="CLU_056339_5_0_11"/>
<dbReference type="Proteomes" id="UP000000754">
    <property type="component" value="Chromosome"/>
</dbReference>
<dbReference type="GO" id="GO:0005737">
    <property type="term" value="C:cytoplasm"/>
    <property type="evidence" value="ECO:0007669"/>
    <property type="project" value="UniProtKB-SubCell"/>
</dbReference>
<dbReference type="GO" id="GO:0016151">
    <property type="term" value="F:nickel cation binding"/>
    <property type="evidence" value="ECO:0007669"/>
    <property type="project" value="UniProtKB-UniRule"/>
</dbReference>
<dbReference type="HAMAP" id="MF_01384">
    <property type="entry name" value="UreD"/>
    <property type="match status" value="1"/>
</dbReference>
<dbReference type="InterPro" id="IPR002669">
    <property type="entry name" value="UreD"/>
</dbReference>
<dbReference type="PANTHER" id="PTHR33643">
    <property type="entry name" value="UREASE ACCESSORY PROTEIN D"/>
    <property type="match status" value="1"/>
</dbReference>
<dbReference type="PANTHER" id="PTHR33643:SF1">
    <property type="entry name" value="UREASE ACCESSORY PROTEIN D"/>
    <property type="match status" value="1"/>
</dbReference>
<dbReference type="Pfam" id="PF01774">
    <property type="entry name" value="UreD"/>
    <property type="match status" value="1"/>
</dbReference>
<reference key="1">
    <citation type="journal article" date="2013" name="Stand. Genomic Sci.">
        <title>Complete genome sequence of Arthrobacter sp. strain FB24.</title>
        <authorList>
            <person name="Nakatsu C.H."/>
            <person name="Barabote R."/>
            <person name="Thompson S."/>
            <person name="Bruce D."/>
            <person name="Detter C."/>
            <person name="Brettin T."/>
            <person name="Han C."/>
            <person name="Beasley F."/>
            <person name="Chen W."/>
            <person name="Konopka A."/>
            <person name="Xie G."/>
        </authorList>
    </citation>
    <scope>NUCLEOTIDE SEQUENCE [LARGE SCALE GENOMIC DNA]</scope>
    <source>
        <strain>FB24</strain>
    </source>
</reference>
<sequence length="293" mass="31719">MSTTAAPEVELVETETPMGELALRVAVRGCRSVAAHQYHRGALRILRPHYLDDSGQVCYVVVNPGGAYLGADLYVIDVEVGDGAKLLLTTQSATKIYRTPGSFAEQRVCLRLGEGAQLELAPDQLIAYREASYRQNTRITVRPSSSLVMAEVVTPGWSPDGASFRYEELRLRNEIQVETPGGTGLLALDNLLIRPPLNDVTGMGFMEGYSHLGSLVVVDARVEQALADEFHALTAGHDACTGVSLTASVGGTTGLVLRSLSNSTEELNRLLGACTALLRERWYGQSPLNLRKY</sequence>
<evidence type="ECO:0000255" key="1">
    <source>
        <dbReference type="HAMAP-Rule" id="MF_01384"/>
    </source>
</evidence>
<evidence type="ECO:0000305" key="2"/>
<organism>
    <name type="scientific">Arthrobacter sp. (strain FB24)</name>
    <dbReference type="NCBI Taxonomy" id="290399"/>
    <lineage>
        <taxon>Bacteria</taxon>
        <taxon>Bacillati</taxon>
        <taxon>Actinomycetota</taxon>
        <taxon>Actinomycetes</taxon>
        <taxon>Micrococcales</taxon>
        <taxon>Micrococcaceae</taxon>
        <taxon>Arthrobacter</taxon>
    </lineage>
</organism>
<feature type="chain" id="PRO_0000346550" description="Urease accessory protein UreD">
    <location>
        <begin position="1"/>
        <end position="293"/>
    </location>
</feature>
<gene>
    <name evidence="1" type="primary">ureD</name>
    <name type="ordered locus">Arth_0247</name>
</gene>
<keyword id="KW-0143">Chaperone</keyword>
<keyword id="KW-0963">Cytoplasm</keyword>
<keyword id="KW-0996">Nickel insertion</keyword>
<keyword id="KW-1185">Reference proteome</keyword>